<comment type="function">
    <text>Seems to promote the survival of visceral and proprioceptive sensory neurons.</text>
</comment>
<comment type="subcellular location">
    <subcellularLocation>
        <location>Secreted</location>
    </subcellularLocation>
</comment>
<comment type="similarity">
    <text evidence="1">Belongs to the NGF-beta family.</text>
</comment>
<proteinExistence type="inferred from homology"/>
<evidence type="ECO:0000305" key="1"/>
<keyword id="KW-0339">Growth factor</keyword>
<keyword id="KW-0964">Secreted</keyword>
<protein>
    <recommendedName>
        <fullName>Neurotrophin-3</fullName>
        <shortName>NT-3</shortName>
    </recommendedName>
    <alternativeName>
        <fullName>HDNF</fullName>
    </alternativeName>
    <alternativeName>
        <fullName>Nerve growth factor 2</fullName>
        <shortName>NGF-2</shortName>
    </alternativeName>
    <alternativeName>
        <fullName>Neurotrophic factor</fullName>
    </alternativeName>
</protein>
<reference key="1">
    <citation type="journal article" date="1991" name="Neuron">
        <title>Evolutionary studies of the nerve growth factor family reveal a novel member abundantly expressed in Xenopus ovary.</title>
        <authorList>
            <person name="Hallboeoek F."/>
            <person name="Ibanez C.F."/>
            <person name="Persson H."/>
        </authorList>
    </citation>
    <scope>NUCLEOTIDE SEQUENCE</scope>
</reference>
<accession>P25434</accession>
<feature type="chain" id="PRO_0000159612" description="Neurotrophin-3">
    <location>
        <begin position="1" status="less than"/>
        <end position="43" status="greater than"/>
    </location>
</feature>
<feature type="non-terminal residue">
    <location>
        <position position="1"/>
    </location>
</feature>
<feature type="non-terminal residue">
    <location>
        <position position="43"/>
    </location>
</feature>
<organism>
    <name type="scientific">Raja clavata</name>
    <name type="common">Thornback ray</name>
    <dbReference type="NCBI Taxonomy" id="7781"/>
    <lineage>
        <taxon>Eukaryota</taxon>
        <taxon>Metazoa</taxon>
        <taxon>Chordata</taxon>
        <taxon>Craniata</taxon>
        <taxon>Vertebrata</taxon>
        <taxon>Chondrichthyes</taxon>
        <taxon>Elasmobranchii</taxon>
        <taxon>Batoidea</taxon>
        <taxon>Rajiformes</taxon>
        <taxon>Rajidae</taxon>
        <taxon>Raja</taxon>
    </lineage>
</organism>
<name>NTF3_RAJCL</name>
<gene>
    <name type="primary">ntf3</name>
</gene>
<dbReference type="SMR" id="P25434"/>
<dbReference type="GO" id="GO:0030424">
    <property type="term" value="C:axon"/>
    <property type="evidence" value="ECO:0007669"/>
    <property type="project" value="TreeGrafter"/>
</dbReference>
<dbReference type="GO" id="GO:0030425">
    <property type="term" value="C:dendrite"/>
    <property type="evidence" value="ECO:0007669"/>
    <property type="project" value="TreeGrafter"/>
</dbReference>
<dbReference type="GO" id="GO:0005615">
    <property type="term" value="C:extracellular space"/>
    <property type="evidence" value="ECO:0007669"/>
    <property type="project" value="TreeGrafter"/>
</dbReference>
<dbReference type="GO" id="GO:0008021">
    <property type="term" value="C:synaptic vesicle"/>
    <property type="evidence" value="ECO:0007669"/>
    <property type="project" value="TreeGrafter"/>
</dbReference>
<dbReference type="GO" id="GO:0008083">
    <property type="term" value="F:growth factor activity"/>
    <property type="evidence" value="ECO:0007669"/>
    <property type="project" value="UniProtKB-KW"/>
</dbReference>
<dbReference type="GO" id="GO:0005163">
    <property type="term" value="F:nerve growth factor receptor binding"/>
    <property type="evidence" value="ECO:0007669"/>
    <property type="project" value="TreeGrafter"/>
</dbReference>
<dbReference type="GO" id="GO:0007169">
    <property type="term" value="P:cell surface receptor protein tyrosine kinase signaling pathway"/>
    <property type="evidence" value="ECO:0007669"/>
    <property type="project" value="TreeGrafter"/>
</dbReference>
<dbReference type="GO" id="GO:0050804">
    <property type="term" value="P:modulation of chemical synaptic transmission"/>
    <property type="evidence" value="ECO:0007669"/>
    <property type="project" value="TreeGrafter"/>
</dbReference>
<dbReference type="GO" id="GO:0043524">
    <property type="term" value="P:negative regulation of neuron apoptotic process"/>
    <property type="evidence" value="ECO:0007669"/>
    <property type="project" value="TreeGrafter"/>
</dbReference>
<dbReference type="GO" id="GO:0021675">
    <property type="term" value="P:nerve development"/>
    <property type="evidence" value="ECO:0007669"/>
    <property type="project" value="TreeGrafter"/>
</dbReference>
<dbReference type="GO" id="GO:0038180">
    <property type="term" value="P:nerve growth factor signaling pathway"/>
    <property type="evidence" value="ECO:0007669"/>
    <property type="project" value="TreeGrafter"/>
</dbReference>
<dbReference type="GO" id="GO:0048812">
    <property type="term" value="P:neuron projection morphogenesis"/>
    <property type="evidence" value="ECO:0007669"/>
    <property type="project" value="TreeGrafter"/>
</dbReference>
<dbReference type="Gene3D" id="2.10.90.10">
    <property type="entry name" value="Cystine-knot cytokines"/>
    <property type="match status" value="1"/>
</dbReference>
<dbReference type="InterPro" id="IPR029034">
    <property type="entry name" value="Cystine-knot_cytokine"/>
</dbReference>
<dbReference type="InterPro" id="IPR020408">
    <property type="entry name" value="Nerve_growth_factor-like"/>
</dbReference>
<dbReference type="InterPro" id="IPR002072">
    <property type="entry name" value="Nerve_growth_factor-rel"/>
</dbReference>
<dbReference type="InterPro" id="IPR019846">
    <property type="entry name" value="Nerve_growth_factor_CS"/>
</dbReference>
<dbReference type="PANTHER" id="PTHR11589">
    <property type="entry name" value="NERVE GROWTH FACTOR NGF -RELATED"/>
    <property type="match status" value="1"/>
</dbReference>
<dbReference type="PANTHER" id="PTHR11589:SF4">
    <property type="entry name" value="NEUROTROPHIN-3"/>
    <property type="match status" value="1"/>
</dbReference>
<dbReference type="Pfam" id="PF00243">
    <property type="entry name" value="NGF"/>
    <property type="match status" value="1"/>
</dbReference>
<dbReference type="SMART" id="SM00140">
    <property type="entry name" value="NGF"/>
    <property type="match status" value="1"/>
</dbReference>
<dbReference type="SUPFAM" id="SSF57501">
    <property type="entry name" value="Cystine-knot cytokines"/>
    <property type="match status" value="1"/>
</dbReference>
<dbReference type="PROSITE" id="PS00248">
    <property type="entry name" value="NGF_1"/>
    <property type="match status" value="1"/>
</dbReference>
<dbReference type="PROSITE" id="PS50270">
    <property type="entry name" value="NGF_2"/>
    <property type="match status" value="1"/>
</dbReference>
<sequence length="43" mass="4916">RCKESKPGKNGCRGIDDKHWNSQCKTSQTYVRALSKENNKYVG</sequence>